<organism>
    <name type="scientific">Entamoeba invadens</name>
    <dbReference type="NCBI Taxonomy" id="33085"/>
    <lineage>
        <taxon>Eukaryota</taxon>
        <taxon>Amoebozoa</taxon>
        <taxon>Evosea</taxon>
        <taxon>Archamoebae</taxon>
        <taxon>Mastigamoebida</taxon>
        <taxon>Entamoebidae</taxon>
        <taxon>Entamoeba</taxon>
    </lineage>
</organism>
<feature type="chain" id="PRO_0000071901" description="Histone H2B">
    <location>
        <begin position="1"/>
        <end position="134"/>
    </location>
</feature>
<feature type="region of interest" description="Disordered" evidence="1">
    <location>
        <begin position="1"/>
        <end position="29"/>
    </location>
</feature>
<feature type="region of interest" description="Disordered" evidence="1">
    <location>
        <begin position="113"/>
        <end position="134"/>
    </location>
</feature>
<feature type="compositionally biased region" description="Polar residues" evidence="1">
    <location>
        <begin position="1"/>
        <end position="10"/>
    </location>
</feature>
<feature type="compositionally biased region" description="Basic and acidic residues" evidence="1">
    <location>
        <begin position="12"/>
        <end position="29"/>
    </location>
</feature>
<feature type="compositionally biased region" description="Polar residues" evidence="1">
    <location>
        <begin position="125"/>
        <end position="134"/>
    </location>
</feature>
<evidence type="ECO:0000256" key="1">
    <source>
        <dbReference type="SAM" id="MobiDB-lite"/>
    </source>
</evidence>
<evidence type="ECO:0000305" key="2"/>
<comment type="function">
    <text>Core component of nucleosome. Nucleosomes wrap and compact DNA into chromatin, limiting DNA accessibility to the cellular machineries which require DNA as a template. Histones thereby play a central role in transcription regulation, DNA repair, DNA replication and chromosomal stability. DNA accessibility is regulated via a complex set of post-translational modifications of histones, also called histone code, and nucleosome remodeling.</text>
</comment>
<comment type="subunit">
    <text>The nucleosome is a histone octamer containing two molecules each of H2A, H2B, H3 and H4 assembled in one H3-H4 heterotetramer and two H2A-H2B heterodimers. The octamer wraps approximately 147 bp of DNA.</text>
</comment>
<comment type="subcellular location">
    <subcellularLocation>
        <location>Nucleus</location>
    </subcellularLocation>
    <subcellularLocation>
        <location>Chromosome</location>
    </subcellularLocation>
</comment>
<comment type="similarity">
    <text evidence="2">Belongs to the histone H2B family.</text>
</comment>
<reference key="1">
    <citation type="journal article" date="1994" name="Mol. Biochem. Parasitol.">
        <title>Increased levels of polyadenylated histone H2B mRNA accumulate during Entamoeba invadens cyst formation.</title>
        <authorList>
            <person name="Sanchez L.B."/>
            <person name="Enea V."/>
            <person name="Eichinger D."/>
        </authorList>
    </citation>
    <scope>NUCLEOTIDE SEQUENCE [MRNA]</scope>
    <source>
        <strain>IP-1</strain>
    </source>
</reference>
<protein>
    <recommendedName>
        <fullName>Histone H2B</fullName>
    </recommendedName>
</protein>
<proteinExistence type="evidence at transcript level"/>
<keyword id="KW-0158">Chromosome</keyword>
<keyword id="KW-0238">DNA-binding</keyword>
<keyword id="KW-0544">Nucleosome core</keyword>
<keyword id="KW-0539">Nucleus</keyword>
<accession>P40284</accession>
<sequence>MSDKASTPKKSATKDATKPKKVGDEEAKKREVKKNFDSYALYISRVLKSVFPDIGITLPSISVMDSFVRDIFERIAMDASSLTRNYQKSTLTTKEIETATKLILKGDLNKHAVSEGQSAVKRAQGQPTSGSKSR</sequence>
<name>H2B_ENTIV</name>
<dbReference type="EMBL" id="L29388">
    <property type="protein sequence ID" value="AAC37212.1"/>
    <property type="molecule type" value="mRNA"/>
</dbReference>
<dbReference type="SMR" id="P40284"/>
<dbReference type="VEuPathDB" id="AmoebaDB:EIN_095510"/>
<dbReference type="OMA" id="SEVEYMG"/>
<dbReference type="GO" id="GO:0000786">
    <property type="term" value="C:nucleosome"/>
    <property type="evidence" value="ECO:0007669"/>
    <property type="project" value="UniProtKB-KW"/>
</dbReference>
<dbReference type="GO" id="GO:0005634">
    <property type="term" value="C:nucleus"/>
    <property type="evidence" value="ECO:0007669"/>
    <property type="project" value="UniProtKB-SubCell"/>
</dbReference>
<dbReference type="GO" id="GO:0003677">
    <property type="term" value="F:DNA binding"/>
    <property type="evidence" value="ECO:0007669"/>
    <property type="project" value="UniProtKB-KW"/>
</dbReference>
<dbReference type="GO" id="GO:0046982">
    <property type="term" value="F:protein heterodimerization activity"/>
    <property type="evidence" value="ECO:0007669"/>
    <property type="project" value="InterPro"/>
</dbReference>
<dbReference type="GO" id="GO:0030527">
    <property type="term" value="F:structural constituent of chromatin"/>
    <property type="evidence" value="ECO:0007669"/>
    <property type="project" value="InterPro"/>
</dbReference>
<dbReference type="CDD" id="cd22910">
    <property type="entry name" value="HFD_H2B"/>
    <property type="match status" value="1"/>
</dbReference>
<dbReference type="FunFam" id="1.10.20.10:FF:000043">
    <property type="entry name" value="Histone H2B"/>
    <property type="match status" value="1"/>
</dbReference>
<dbReference type="Gene3D" id="1.10.20.10">
    <property type="entry name" value="Histone, subunit A"/>
    <property type="match status" value="1"/>
</dbReference>
<dbReference type="InterPro" id="IPR009072">
    <property type="entry name" value="Histone-fold"/>
</dbReference>
<dbReference type="InterPro" id="IPR007125">
    <property type="entry name" value="Histone_H2A/H2B/H3"/>
</dbReference>
<dbReference type="InterPro" id="IPR000558">
    <property type="entry name" value="Histone_H2B"/>
</dbReference>
<dbReference type="InterPro" id="IPR055333">
    <property type="entry name" value="HISTONE_H2B_site"/>
</dbReference>
<dbReference type="PANTHER" id="PTHR23428">
    <property type="entry name" value="HISTONE H2B"/>
    <property type="match status" value="1"/>
</dbReference>
<dbReference type="Pfam" id="PF00125">
    <property type="entry name" value="Histone"/>
    <property type="match status" value="1"/>
</dbReference>
<dbReference type="PRINTS" id="PR00621">
    <property type="entry name" value="HISTONEH2B"/>
</dbReference>
<dbReference type="SMART" id="SM00427">
    <property type="entry name" value="H2B"/>
    <property type="match status" value="1"/>
</dbReference>
<dbReference type="SUPFAM" id="SSF47113">
    <property type="entry name" value="Histone-fold"/>
    <property type="match status" value="1"/>
</dbReference>
<dbReference type="PROSITE" id="PS00357">
    <property type="entry name" value="HISTONE_H2B"/>
    <property type="match status" value="1"/>
</dbReference>